<sequence length="1299" mass="147500">MVAHKKSKKKSKKQHGSAGEKELHESKIHAEIIDDEAEYPTSRVIKRAPNGDVIVESLPEEESLDRSELNQDHRSGSSSSSTNSGGVTNTADCNADADNEEVEDTKWPIKLDTHWESLSLEERRNILRISKDELFDMIKSYKNMHNCDCSMCGRHNNLNIEQEIEQIYCELYDSAREEDSDTDFVQFHLKLIKEYQNGSNNTHHHMRHHGDKQDSNICHENFAHNDNDDNNDSTNKNAFLSSILPKEKNASTSENECTNDFLDSLSEDSAIKYCLSEGAIGLDKSYQVDFLGKEEVDSNMDTIPNSDNKTQTALDWKHEIEQFKSSKQKQVSESTTGKEALPPINDIDNTNEVIPEHDEFDSKLLHFAKTVVSSHPHIAEEFINRAMMYPHIKAITEDMMNNEGEGLKRAMESLVLQQELQDWRENMAVSIEKKIYEMDPTEPVIDVSESDSHENERVNGPANALEENNKKDVIESDSLDRPSLVDNNKVDSLIDSIPFKFVKDPKAVASLKNAFYDIFTNKTRRSEIDQDDKEYKEELERLRNEISADEDQASYEWSNDEYEESNDHDEDAEGYVDDECIDDHHLDSGYDDENEDEDIIYDDLHENVKLNEDPSAVPNGHTQLIHHDNSVTSNVSEDGIDDNYDSELDHAERLEEGRRLIQIAITKLLQKKLIASYQEKEAEKNRERLLMELEAEENQKKEKEKKKLKKKEKEKEKKRQQQLAKEEEKKRQEEEEIRLKKEAEEKEIARREAQRKKVEEAKRKNDEKRKKKLAEQRRREEEQERIRKEKEEQKRQREEEQKQKKMEKERKQREFEEQRLLKKKEAEQLQKLKENQKLNEKSMQKNQDTTTEGVPYGSVSTNPLQNNSTLNDDIFNMINEVSKSLSSSPSRNQNDLLGSSVLSNVDHQGGLNAGNVFIPPSLSMSEMSPHAQAGFNTLGSSLQPNLLNGWDQQSSTQAYYHANQPSSSEAPGLLPLSHGGSSSKFSSFADTTVDVTDDVNNLTSFLKDTTINDISLGSTSSIPAQNLDPVNMAPRPQSAVYNQPNLWNNDPNQRLSNFGQQHVQQNPISSSHSQPRRSIWDTGAENTFGVASANNFASNIWDTPTSTPALPNTLLSSQVAATSVDSYEEVLAKTYKMLSPDNSFVPLDKLYQTSLTQINAKSVLSYPQFISTLVSMKNSYNTELLNDNTGLLAYCRMGSVPVPSGLPSYNRQNTFPHATTQVQSDSQQINSVSTPISNPLPQPSSVFNDVHYNQTATTSPANHGNPIPGPTSTIASDPSNFVNFGQSYPNSYQTGNIWS</sequence>
<evidence type="ECO:0000250" key="1"/>
<evidence type="ECO:0000255" key="2"/>
<evidence type="ECO:0000256" key="3">
    <source>
        <dbReference type="SAM" id="MobiDB-lite"/>
    </source>
</evidence>
<evidence type="ECO:0000305" key="4"/>
<gene>
    <name type="primary">NST1</name>
    <name type="ordered locus">KLLA0C13794g</name>
</gene>
<organism>
    <name type="scientific">Kluyveromyces lactis (strain ATCC 8585 / CBS 2359 / DSM 70799 / NBRC 1267 / NRRL Y-1140 / WM37)</name>
    <name type="common">Yeast</name>
    <name type="synonym">Candida sphaerica</name>
    <dbReference type="NCBI Taxonomy" id="284590"/>
    <lineage>
        <taxon>Eukaryota</taxon>
        <taxon>Fungi</taxon>
        <taxon>Dikarya</taxon>
        <taxon>Ascomycota</taxon>
        <taxon>Saccharomycotina</taxon>
        <taxon>Saccharomycetes</taxon>
        <taxon>Saccharomycetales</taxon>
        <taxon>Saccharomycetaceae</taxon>
        <taxon>Kluyveromyces</taxon>
    </lineage>
</organism>
<comment type="function">
    <text evidence="1">May act as a negative regulator of salt tolerance.</text>
</comment>
<comment type="subcellular location">
    <subcellularLocation>
        <location evidence="1">Cytoplasm</location>
    </subcellularLocation>
</comment>
<comment type="similarity">
    <text evidence="4">Belongs to the NST1 family.</text>
</comment>
<accession>Q6CTC3</accession>
<dbReference type="EMBL" id="CR382123">
    <property type="protein sequence ID" value="CAH01667.1"/>
    <property type="molecule type" value="Genomic_DNA"/>
</dbReference>
<dbReference type="RefSeq" id="XP_452816.1">
    <property type="nucleotide sequence ID" value="XM_452816.1"/>
</dbReference>
<dbReference type="FunCoup" id="Q6CTC3">
    <property type="interactions" value="30"/>
</dbReference>
<dbReference type="STRING" id="284590.Q6CTC3"/>
<dbReference type="PaxDb" id="284590-Q6CTC3"/>
<dbReference type="KEGG" id="kla:KLLA0_C13794g"/>
<dbReference type="eggNOG" id="ENOG502QSSK">
    <property type="taxonomic scope" value="Eukaryota"/>
</dbReference>
<dbReference type="HOGENOM" id="CLU_267374_0_0_1"/>
<dbReference type="InParanoid" id="Q6CTC3"/>
<dbReference type="OMA" id="SCACKYC"/>
<dbReference type="Proteomes" id="UP000000598">
    <property type="component" value="Chromosome C"/>
</dbReference>
<dbReference type="GO" id="GO:0005737">
    <property type="term" value="C:cytoplasm"/>
    <property type="evidence" value="ECO:0007669"/>
    <property type="project" value="UniProtKB-SubCell"/>
</dbReference>
<dbReference type="InterPro" id="IPR051483">
    <property type="entry name" value="MAP7_domain-containing"/>
</dbReference>
<dbReference type="InterPro" id="IPR025279">
    <property type="entry name" value="NST1"/>
</dbReference>
<dbReference type="PANTHER" id="PTHR15073">
    <property type="entry name" value="MICROTUBULE-ASSOCIATED PROTEIN"/>
    <property type="match status" value="1"/>
</dbReference>
<dbReference type="PANTHER" id="PTHR15073:SF1">
    <property type="entry name" value="RETICULOCYTE-BINDING PROTEIN HOMOLOG 2A"/>
    <property type="match status" value="1"/>
</dbReference>
<dbReference type="Pfam" id="PF13945">
    <property type="entry name" value="NST1"/>
    <property type="match status" value="1"/>
</dbReference>
<feature type="chain" id="PRO_0000324451" description="Stress response protein NST1">
    <location>
        <begin position="1"/>
        <end position="1299"/>
    </location>
</feature>
<feature type="region of interest" description="Disordered" evidence="3">
    <location>
        <begin position="1"/>
        <end position="104"/>
    </location>
</feature>
<feature type="region of interest" description="Disordered" evidence="3">
    <location>
        <begin position="200"/>
        <end position="237"/>
    </location>
</feature>
<feature type="region of interest" description="Disordered" evidence="3">
    <location>
        <begin position="324"/>
        <end position="347"/>
    </location>
</feature>
<feature type="region of interest" description="Disordered" evidence="3">
    <location>
        <begin position="446"/>
        <end position="486"/>
    </location>
</feature>
<feature type="region of interest" description="Disordered" evidence="3">
    <location>
        <begin position="543"/>
        <end position="573"/>
    </location>
</feature>
<feature type="region of interest" description="Disordered" evidence="3">
    <location>
        <begin position="694"/>
        <end position="816"/>
    </location>
</feature>
<feature type="region of interest" description="Disordered" evidence="3">
    <location>
        <begin position="834"/>
        <end position="868"/>
    </location>
</feature>
<feature type="region of interest" description="Disordered" evidence="3">
    <location>
        <begin position="960"/>
        <end position="981"/>
    </location>
</feature>
<feature type="coiled-coil region" evidence="2">
    <location>
        <begin position="675"/>
        <end position="847"/>
    </location>
</feature>
<feature type="compositionally biased region" description="Basic residues" evidence="3">
    <location>
        <begin position="1"/>
        <end position="15"/>
    </location>
</feature>
<feature type="compositionally biased region" description="Basic and acidic residues" evidence="3">
    <location>
        <begin position="18"/>
        <end position="32"/>
    </location>
</feature>
<feature type="compositionally biased region" description="Basic and acidic residues" evidence="3">
    <location>
        <begin position="64"/>
        <end position="75"/>
    </location>
</feature>
<feature type="compositionally biased region" description="Low complexity" evidence="3">
    <location>
        <begin position="76"/>
        <end position="90"/>
    </location>
</feature>
<feature type="compositionally biased region" description="Polar residues" evidence="3">
    <location>
        <begin position="325"/>
        <end position="337"/>
    </location>
</feature>
<feature type="compositionally biased region" description="Basic and acidic residues" evidence="3">
    <location>
        <begin position="467"/>
        <end position="480"/>
    </location>
</feature>
<feature type="compositionally biased region" description="Acidic residues" evidence="3">
    <location>
        <begin position="547"/>
        <end position="573"/>
    </location>
</feature>
<feature type="compositionally biased region" description="Basic and acidic residues" evidence="3">
    <location>
        <begin position="711"/>
        <end position="816"/>
    </location>
</feature>
<feature type="compositionally biased region" description="Basic and acidic residues" evidence="3">
    <location>
        <begin position="834"/>
        <end position="843"/>
    </location>
</feature>
<feature type="compositionally biased region" description="Polar residues" evidence="3">
    <location>
        <begin position="844"/>
        <end position="868"/>
    </location>
</feature>
<feature type="compositionally biased region" description="Polar residues" evidence="3">
    <location>
        <begin position="960"/>
        <end position="969"/>
    </location>
</feature>
<feature type="compositionally biased region" description="Low complexity" evidence="3">
    <location>
        <begin position="971"/>
        <end position="981"/>
    </location>
</feature>
<keyword id="KW-0175">Coiled coil</keyword>
<keyword id="KW-0963">Cytoplasm</keyword>
<keyword id="KW-1185">Reference proteome</keyword>
<keyword id="KW-0346">Stress response</keyword>
<name>NST1_KLULA</name>
<proteinExistence type="inferred from homology"/>
<protein>
    <recommendedName>
        <fullName>Stress response protein NST1</fullName>
    </recommendedName>
</protein>
<reference key="1">
    <citation type="journal article" date="2004" name="Nature">
        <title>Genome evolution in yeasts.</title>
        <authorList>
            <person name="Dujon B."/>
            <person name="Sherman D."/>
            <person name="Fischer G."/>
            <person name="Durrens P."/>
            <person name="Casaregola S."/>
            <person name="Lafontaine I."/>
            <person name="de Montigny J."/>
            <person name="Marck C."/>
            <person name="Neuveglise C."/>
            <person name="Talla E."/>
            <person name="Goffard N."/>
            <person name="Frangeul L."/>
            <person name="Aigle M."/>
            <person name="Anthouard V."/>
            <person name="Babour A."/>
            <person name="Barbe V."/>
            <person name="Barnay S."/>
            <person name="Blanchin S."/>
            <person name="Beckerich J.-M."/>
            <person name="Beyne E."/>
            <person name="Bleykasten C."/>
            <person name="Boisrame A."/>
            <person name="Boyer J."/>
            <person name="Cattolico L."/>
            <person name="Confanioleri F."/>
            <person name="de Daruvar A."/>
            <person name="Despons L."/>
            <person name="Fabre E."/>
            <person name="Fairhead C."/>
            <person name="Ferry-Dumazet H."/>
            <person name="Groppi A."/>
            <person name="Hantraye F."/>
            <person name="Hennequin C."/>
            <person name="Jauniaux N."/>
            <person name="Joyet P."/>
            <person name="Kachouri R."/>
            <person name="Kerrest A."/>
            <person name="Koszul R."/>
            <person name="Lemaire M."/>
            <person name="Lesur I."/>
            <person name="Ma L."/>
            <person name="Muller H."/>
            <person name="Nicaud J.-M."/>
            <person name="Nikolski M."/>
            <person name="Oztas S."/>
            <person name="Ozier-Kalogeropoulos O."/>
            <person name="Pellenz S."/>
            <person name="Potier S."/>
            <person name="Richard G.-F."/>
            <person name="Straub M.-L."/>
            <person name="Suleau A."/>
            <person name="Swennen D."/>
            <person name="Tekaia F."/>
            <person name="Wesolowski-Louvel M."/>
            <person name="Westhof E."/>
            <person name="Wirth B."/>
            <person name="Zeniou-Meyer M."/>
            <person name="Zivanovic Y."/>
            <person name="Bolotin-Fukuhara M."/>
            <person name="Thierry A."/>
            <person name="Bouchier C."/>
            <person name="Caudron B."/>
            <person name="Scarpelli C."/>
            <person name="Gaillardin C."/>
            <person name="Weissenbach J."/>
            <person name="Wincker P."/>
            <person name="Souciet J.-L."/>
        </authorList>
    </citation>
    <scope>NUCLEOTIDE SEQUENCE [LARGE SCALE GENOMIC DNA]</scope>
    <source>
        <strain>ATCC 8585 / CBS 2359 / DSM 70799 / NBRC 1267 / NRRL Y-1140 / WM37</strain>
    </source>
</reference>